<sequence length="298" mass="32813">MQNNNRQELQTLRDLIRYAVSRLNAARVALGHGSDNAWDEAVYLVLHGLHLPPDTLDPFLDARVLPSERSRVLDLIDRRVTERLPAAYLTGEAWLRGHRFHVDRRVIVPRSPIAELLDEGLAPWVRDPLQVERALDMCTGSGCLAILAALAFPVAQVDAVDVSSDALEVAARNVAEYGLQDRLTLRQGNLFEALPAAAYDVIVCNPPYVNQASMGALPQEYRHEPALALAGGADGMDLVRRILAAAPGYLSADGVLVLEIGHERDHFEAAFPDLQPVWLDTAESSDQILLLTREQLNT</sequence>
<reference key="1">
    <citation type="journal article" date="2003" name="Nat. Genet.">
        <title>Comparative analysis of the genome sequences of Bordetella pertussis, Bordetella parapertussis and Bordetella bronchiseptica.</title>
        <authorList>
            <person name="Parkhill J."/>
            <person name="Sebaihia M."/>
            <person name="Preston A."/>
            <person name="Murphy L.D."/>
            <person name="Thomson N.R."/>
            <person name="Harris D.E."/>
            <person name="Holden M.T.G."/>
            <person name="Churcher C.M."/>
            <person name="Bentley S.D."/>
            <person name="Mungall K.L."/>
            <person name="Cerdeno-Tarraga A.-M."/>
            <person name="Temple L."/>
            <person name="James K.D."/>
            <person name="Harris B."/>
            <person name="Quail M.A."/>
            <person name="Achtman M."/>
            <person name="Atkin R."/>
            <person name="Baker S."/>
            <person name="Basham D."/>
            <person name="Bason N."/>
            <person name="Cherevach I."/>
            <person name="Chillingworth T."/>
            <person name="Collins M."/>
            <person name="Cronin A."/>
            <person name="Davis P."/>
            <person name="Doggett J."/>
            <person name="Feltwell T."/>
            <person name="Goble A."/>
            <person name="Hamlin N."/>
            <person name="Hauser H."/>
            <person name="Holroyd S."/>
            <person name="Jagels K."/>
            <person name="Leather S."/>
            <person name="Moule S."/>
            <person name="Norberczak H."/>
            <person name="O'Neil S."/>
            <person name="Ormond D."/>
            <person name="Price C."/>
            <person name="Rabbinowitsch E."/>
            <person name="Rutter S."/>
            <person name="Sanders M."/>
            <person name="Saunders D."/>
            <person name="Seeger K."/>
            <person name="Sharp S."/>
            <person name="Simmonds M."/>
            <person name="Skelton J."/>
            <person name="Squares R."/>
            <person name="Squares S."/>
            <person name="Stevens K."/>
            <person name="Unwin L."/>
            <person name="Whitehead S."/>
            <person name="Barrell B.G."/>
            <person name="Maskell D.J."/>
        </authorList>
    </citation>
    <scope>NUCLEOTIDE SEQUENCE [LARGE SCALE GENOMIC DNA]</scope>
    <source>
        <strain>Tohama I / ATCC BAA-589 / NCTC 13251</strain>
    </source>
</reference>
<keyword id="KW-0489">Methyltransferase</keyword>
<keyword id="KW-1185">Reference proteome</keyword>
<keyword id="KW-0949">S-adenosyl-L-methionine</keyword>
<keyword id="KW-0808">Transferase</keyword>
<name>PRMB_BORPE</name>
<comment type="function">
    <text evidence="1">Methylates large ribosomal subunit protein uL3 on a specific glutamine residue.</text>
</comment>
<comment type="catalytic activity">
    <reaction evidence="1">
        <text>L-glutaminyl-[ribosomal protein uL3] + S-adenosyl-L-methionine = N(5)-methyl-L-glutaminyl-[ribosomal protein uL3] + S-adenosyl-L-homocysteine + H(+)</text>
        <dbReference type="Rhea" id="RHEA:45020"/>
        <dbReference type="Rhea" id="RHEA-COMP:11063"/>
        <dbReference type="Rhea" id="RHEA-COMP:11064"/>
        <dbReference type="ChEBI" id="CHEBI:15378"/>
        <dbReference type="ChEBI" id="CHEBI:30011"/>
        <dbReference type="ChEBI" id="CHEBI:57856"/>
        <dbReference type="ChEBI" id="CHEBI:59789"/>
        <dbReference type="ChEBI" id="CHEBI:61891"/>
        <dbReference type="EC" id="2.1.1.298"/>
    </reaction>
</comment>
<comment type="similarity">
    <text evidence="1">Belongs to the protein N5-glutamine methyltransferase family. PrmB subfamily.</text>
</comment>
<organism>
    <name type="scientific">Bordetella pertussis (strain Tohama I / ATCC BAA-589 / NCTC 13251)</name>
    <dbReference type="NCBI Taxonomy" id="257313"/>
    <lineage>
        <taxon>Bacteria</taxon>
        <taxon>Pseudomonadati</taxon>
        <taxon>Pseudomonadota</taxon>
        <taxon>Betaproteobacteria</taxon>
        <taxon>Burkholderiales</taxon>
        <taxon>Alcaligenaceae</taxon>
        <taxon>Bordetella</taxon>
    </lineage>
</organism>
<gene>
    <name evidence="1" type="primary">prmB</name>
    <name type="ordered locus">BP1762</name>
</gene>
<protein>
    <recommendedName>
        <fullName evidence="1">Ribosomal protein uL3 glutamine methyltransferase</fullName>
        <shortName evidence="1">uL3 MTase</shortName>
        <ecNumber evidence="1">2.1.1.298</ecNumber>
    </recommendedName>
    <alternativeName>
        <fullName evidence="1">N5-glutamine methyltransferase PrmB</fullName>
    </alternativeName>
</protein>
<accession>Q7VXJ6</accession>
<proteinExistence type="inferred from homology"/>
<dbReference type="EC" id="2.1.1.298" evidence="1"/>
<dbReference type="EMBL" id="BX640416">
    <property type="protein sequence ID" value="CAE42049.1"/>
    <property type="molecule type" value="Genomic_DNA"/>
</dbReference>
<dbReference type="RefSeq" id="NP_880474.1">
    <property type="nucleotide sequence ID" value="NC_002929.2"/>
</dbReference>
<dbReference type="RefSeq" id="WP_010930547.1">
    <property type="nucleotide sequence ID" value="NZ_CP039022.1"/>
</dbReference>
<dbReference type="SMR" id="Q7VXJ6"/>
<dbReference type="STRING" id="257313.BP1762"/>
<dbReference type="PaxDb" id="257313-BP1762"/>
<dbReference type="KEGG" id="bpe:BP1762"/>
<dbReference type="PATRIC" id="fig|257313.5.peg.1891"/>
<dbReference type="eggNOG" id="COG2890">
    <property type="taxonomic scope" value="Bacteria"/>
</dbReference>
<dbReference type="HOGENOM" id="CLU_018398_5_1_4"/>
<dbReference type="Proteomes" id="UP000002676">
    <property type="component" value="Chromosome"/>
</dbReference>
<dbReference type="GO" id="GO:0005829">
    <property type="term" value="C:cytosol"/>
    <property type="evidence" value="ECO:0007669"/>
    <property type="project" value="TreeGrafter"/>
</dbReference>
<dbReference type="GO" id="GO:0003676">
    <property type="term" value="F:nucleic acid binding"/>
    <property type="evidence" value="ECO:0007669"/>
    <property type="project" value="InterPro"/>
</dbReference>
<dbReference type="GO" id="GO:0036009">
    <property type="term" value="F:protein-glutamine N-methyltransferase activity"/>
    <property type="evidence" value="ECO:0007669"/>
    <property type="project" value="UniProtKB-UniRule"/>
</dbReference>
<dbReference type="GO" id="GO:0032259">
    <property type="term" value="P:methylation"/>
    <property type="evidence" value="ECO:0007669"/>
    <property type="project" value="UniProtKB-KW"/>
</dbReference>
<dbReference type="CDD" id="cd02440">
    <property type="entry name" value="AdoMet_MTases"/>
    <property type="match status" value="1"/>
</dbReference>
<dbReference type="Gene3D" id="1.10.8.10">
    <property type="entry name" value="DNA helicase RuvA subunit, C-terminal domain"/>
    <property type="match status" value="1"/>
</dbReference>
<dbReference type="Gene3D" id="3.40.50.150">
    <property type="entry name" value="Vaccinia Virus protein VP39"/>
    <property type="match status" value="1"/>
</dbReference>
<dbReference type="HAMAP" id="MF_02125">
    <property type="entry name" value="L3_methyltr_PrmB"/>
    <property type="match status" value="1"/>
</dbReference>
<dbReference type="InterPro" id="IPR002052">
    <property type="entry name" value="DNA_methylase_N6_adenine_CS"/>
</dbReference>
<dbReference type="InterPro" id="IPR004556">
    <property type="entry name" value="HemK-like"/>
</dbReference>
<dbReference type="InterPro" id="IPR017127">
    <property type="entry name" value="Ribosome_uL3_MTase"/>
</dbReference>
<dbReference type="InterPro" id="IPR029063">
    <property type="entry name" value="SAM-dependent_MTases_sf"/>
</dbReference>
<dbReference type="InterPro" id="IPR007848">
    <property type="entry name" value="Small_mtfrase_dom"/>
</dbReference>
<dbReference type="NCBIfam" id="TIGR00536">
    <property type="entry name" value="hemK_fam"/>
    <property type="match status" value="1"/>
</dbReference>
<dbReference type="NCBIfam" id="TIGR03533">
    <property type="entry name" value="L3_gln_methyl"/>
    <property type="match status" value="1"/>
</dbReference>
<dbReference type="PANTHER" id="PTHR47806">
    <property type="entry name" value="50S RIBOSOMAL PROTEIN L3 GLUTAMINE METHYLTRANSFERASE"/>
    <property type="match status" value="1"/>
</dbReference>
<dbReference type="PANTHER" id="PTHR47806:SF1">
    <property type="entry name" value="RIBOSOMAL PROTEIN UL3 GLUTAMINE METHYLTRANSFERASE"/>
    <property type="match status" value="1"/>
</dbReference>
<dbReference type="Pfam" id="PF05175">
    <property type="entry name" value="MTS"/>
    <property type="match status" value="1"/>
</dbReference>
<dbReference type="PIRSF" id="PIRSF037167">
    <property type="entry name" value="Mtase_YfcB_prd"/>
    <property type="match status" value="1"/>
</dbReference>
<dbReference type="SUPFAM" id="SSF53335">
    <property type="entry name" value="S-adenosyl-L-methionine-dependent methyltransferases"/>
    <property type="match status" value="1"/>
</dbReference>
<feature type="chain" id="PRO_0000414176" description="Ribosomal protein uL3 glutamine methyltransferase">
    <location>
        <begin position="1"/>
        <end position="298"/>
    </location>
</feature>
<evidence type="ECO:0000255" key="1">
    <source>
        <dbReference type="HAMAP-Rule" id="MF_02125"/>
    </source>
</evidence>